<reference key="1">
    <citation type="submission" date="2008-10" db="EMBL/GenBank/DDBJ databases">
        <title>Genome sequence of Bacillus cereus G9842.</title>
        <authorList>
            <person name="Dodson R.J."/>
            <person name="Durkin A.S."/>
            <person name="Rosovitz M.J."/>
            <person name="Rasko D.A."/>
            <person name="Hoffmaster A."/>
            <person name="Ravel J."/>
            <person name="Sutton G."/>
        </authorList>
    </citation>
    <scope>NUCLEOTIDE SEQUENCE [LARGE SCALE GENOMIC DNA]</scope>
    <source>
        <strain>G9842</strain>
    </source>
</reference>
<name>GLMU_BACC2</name>
<proteinExistence type="inferred from homology"/>
<dbReference type="EC" id="2.7.7.23" evidence="1"/>
<dbReference type="EC" id="2.3.1.157" evidence="1"/>
<dbReference type="EMBL" id="CP001186">
    <property type="protein sequence ID" value="ACK93676.1"/>
    <property type="molecule type" value="Genomic_DNA"/>
</dbReference>
<dbReference type="RefSeq" id="WP_000071039.1">
    <property type="nucleotide sequence ID" value="NC_011772.1"/>
</dbReference>
<dbReference type="SMR" id="B7ISV9"/>
<dbReference type="GeneID" id="72446850"/>
<dbReference type="KEGG" id="bcg:BCG9842_B5262"/>
<dbReference type="HOGENOM" id="CLU_029499_15_2_9"/>
<dbReference type="UniPathway" id="UPA00113">
    <property type="reaction ID" value="UER00532"/>
</dbReference>
<dbReference type="UniPathway" id="UPA00113">
    <property type="reaction ID" value="UER00533"/>
</dbReference>
<dbReference type="UniPathway" id="UPA00973"/>
<dbReference type="Proteomes" id="UP000006744">
    <property type="component" value="Chromosome"/>
</dbReference>
<dbReference type="GO" id="GO:0005737">
    <property type="term" value="C:cytoplasm"/>
    <property type="evidence" value="ECO:0007669"/>
    <property type="project" value="UniProtKB-SubCell"/>
</dbReference>
<dbReference type="GO" id="GO:0016020">
    <property type="term" value="C:membrane"/>
    <property type="evidence" value="ECO:0007669"/>
    <property type="project" value="GOC"/>
</dbReference>
<dbReference type="GO" id="GO:0019134">
    <property type="term" value="F:glucosamine-1-phosphate N-acetyltransferase activity"/>
    <property type="evidence" value="ECO:0007669"/>
    <property type="project" value="UniProtKB-UniRule"/>
</dbReference>
<dbReference type="GO" id="GO:0000287">
    <property type="term" value="F:magnesium ion binding"/>
    <property type="evidence" value="ECO:0007669"/>
    <property type="project" value="UniProtKB-UniRule"/>
</dbReference>
<dbReference type="GO" id="GO:0003977">
    <property type="term" value="F:UDP-N-acetylglucosamine diphosphorylase activity"/>
    <property type="evidence" value="ECO:0007669"/>
    <property type="project" value="UniProtKB-UniRule"/>
</dbReference>
<dbReference type="GO" id="GO:0000902">
    <property type="term" value="P:cell morphogenesis"/>
    <property type="evidence" value="ECO:0007669"/>
    <property type="project" value="UniProtKB-UniRule"/>
</dbReference>
<dbReference type="GO" id="GO:0071555">
    <property type="term" value="P:cell wall organization"/>
    <property type="evidence" value="ECO:0007669"/>
    <property type="project" value="UniProtKB-KW"/>
</dbReference>
<dbReference type="GO" id="GO:0009245">
    <property type="term" value="P:lipid A biosynthetic process"/>
    <property type="evidence" value="ECO:0007669"/>
    <property type="project" value="UniProtKB-UniRule"/>
</dbReference>
<dbReference type="GO" id="GO:0009252">
    <property type="term" value="P:peptidoglycan biosynthetic process"/>
    <property type="evidence" value="ECO:0007669"/>
    <property type="project" value="UniProtKB-UniRule"/>
</dbReference>
<dbReference type="GO" id="GO:0008360">
    <property type="term" value="P:regulation of cell shape"/>
    <property type="evidence" value="ECO:0007669"/>
    <property type="project" value="UniProtKB-KW"/>
</dbReference>
<dbReference type="GO" id="GO:0006048">
    <property type="term" value="P:UDP-N-acetylglucosamine biosynthetic process"/>
    <property type="evidence" value="ECO:0007669"/>
    <property type="project" value="UniProtKB-UniPathway"/>
</dbReference>
<dbReference type="CDD" id="cd02540">
    <property type="entry name" value="GT2_GlmU_N_bac"/>
    <property type="match status" value="1"/>
</dbReference>
<dbReference type="CDD" id="cd03353">
    <property type="entry name" value="LbH_GlmU_C"/>
    <property type="match status" value="1"/>
</dbReference>
<dbReference type="FunFam" id="2.160.10.10:FF:000016">
    <property type="entry name" value="Bifunctional protein GlmU"/>
    <property type="match status" value="1"/>
</dbReference>
<dbReference type="FunFam" id="3.90.550.10:FF:000006">
    <property type="entry name" value="Bifunctional protein GlmU"/>
    <property type="match status" value="1"/>
</dbReference>
<dbReference type="Gene3D" id="2.160.10.10">
    <property type="entry name" value="Hexapeptide repeat proteins"/>
    <property type="match status" value="1"/>
</dbReference>
<dbReference type="Gene3D" id="3.90.550.10">
    <property type="entry name" value="Spore Coat Polysaccharide Biosynthesis Protein SpsA, Chain A"/>
    <property type="match status" value="1"/>
</dbReference>
<dbReference type="HAMAP" id="MF_01631">
    <property type="entry name" value="GlmU"/>
    <property type="match status" value="1"/>
</dbReference>
<dbReference type="InterPro" id="IPR005882">
    <property type="entry name" value="Bifunctional_GlmU"/>
</dbReference>
<dbReference type="InterPro" id="IPR050065">
    <property type="entry name" value="GlmU-like"/>
</dbReference>
<dbReference type="InterPro" id="IPR038009">
    <property type="entry name" value="GlmU_C_LbH"/>
</dbReference>
<dbReference type="InterPro" id="IPR001451">
    <property type="entry name" value="Hexapep"/>
</dbReference>
<dbReference type="InterPro" id="IPR018357">
    <property type="entry name" value="Hexapep_transf_CS"/>
</dbReference>
<dbReference type="InterPro" id="IPR005835">
    <property type="entry name" value="NTP_transferase_dom"/>
</dbReference>
<dbReference type="InterPro" id="IPR029044">
    <property type="entry name" value="Nucleotide-diphossugar_trans"/>
</dbReference>
<dbReference type="InterPro" id="IPR011004">
    <property type="entry name" value="Trimer_LpxA-like_sf"/>
</dbReference>
<dbReference type="NCBIfam" id="TIGR01173">
    <property type="entry name" value="glmU"/>
    <property type="match status" value="1"/>
</dbReference>
<dbReference type="NCBIfam" id="NF010934">
    <property type="entry name" value="PRK14354.1"/>
    <property type="match status" value="1"/>
</dbReference>
<dbReference type="PANTHER" id="PTHR43584:SF3">
    <property type="entry name" value="BIFUNCTIONAL PROTEIN GLMU"/>
    <property type="match status" value="1"/>
</dbReference>
<dbReference type="PANTHER" id="PTHR43584">
    <property type="entry name" value="NUCLEOTIDYL TRANSFERASE"/>
    <property type="match status" value="1"/>
</dbReference>
<dbReference type="Pfam" id="PF00132">
    <property type="entry name" value="Hexapep"/>
    <property type="match status" value="3"/>
</dbReference>
<dbReference type="Pfam" id="PF00483">
    <property type="entry name" value="NTP_transferase"/>
    <property type="match status" value="1"/>
</dbReference>
<dbReference type="SUPFAM" id="SSF53448">
    <property type="entry name" value="Nucleotide-diphospho-sugar transferases"/>
    <property type="match status" value="1"/>
</dbReference>
<dbReference type="SUPFAM" id="SSF51161">
    <property type="entry name" value="Trimeric LpxA-like enzymes"/>
    <property type="match status" value="1"/>
</dbReference>
<dbReference type="PROSITE" id="PS00101">
    <property type="entry name" value="HEXAPEP_TRANSFERASES"/>
    <property type="match status" value="1"/>
</dbReference>
<evidence type="ECO:0000255" key="1">
    <source>
        <dbReference type="HAMAP-Rule" id="MF_01631"/>
    </source>
</evidence>
<protein>
    <recommendedName>
        <fullName evidence="1">Bifunctional protein GlmU</fullName>
    </recommendedName>
    <domain>
        <recommendedName>
            <fullName evidence="1">UDP-N-acetylglucosamine pyrophosphorylase</fullName>
            <ecNumber evidence="1">2.7.7.23</ecNumber>
        </recommendedName>
        <alternativeName>
            <fullName evidence="1">N-acetylglucosamine-1-phosphate uridyltransferase</fullName>
        </alternativeName>
    </domain>
    <domain>
        <recommendedName>
            <fullName evidence="1">Glucosamine-1-phosphate N-acetyltransferase</fullName>
            <ecNumber evidence="1">2.3.1.157</ecNumber>
        </recommendedName>
    </domain>
</protein>
<keyword id="KW-0012">Acyltransferase</keyword>
<keyword id="KW-0133">Cell shape</keyword>
<keyword id="KW-0961">Cell wall biogenesis/degradation</keyword>
<keyword id="KW-0963">Cytoplasm</keyword>
<keyword id="KW-0460">Magnesium</keyword>
<keyword id="KW-0479">Metal-binding</keyword>
<keyword id="KW-0511">Multifunctional enzyme</keyword>
<keyword id="KW-0548">Nucleotidyltransferase</keyword>
<keyword id="KW-0573">Peptidoglycan synthesis</keyword>
<keyword id="KW-0677">Repeat</keyword>
<keyword id="KW-0808">Transferase</keyword>
<organism>
    <name type="scientific">Bacillus cereus (strain G9842)</name>
    <dbReference type="NCBI Taxonomy" id="405531"/>
    <lineage>
        <taxon>Bacteria</taxon>
        <taxon>Bacillati</taxon>
        <taxon>Bacillota</taxon>
        <taxon>Bacilli</taxon>
        <taxon>Bacillales</taxon>
        <taxon>Bacillaceae</taxon>
        <taxon>Bacillus</taxon>
        <taxon>Bacillus cereus group</taxon>
    </lineage>
</organism>
<accession>B7ISV9</accession>
<feature type="chain" id="PRO_1000186399" description="Bifunctional protein GlmU">
    <location>
        <begin position="1"/>
        <end position="459"/>
    </location>
</feature>
<feature type="region of interest" description="Pyrophosphorylase" evidence="1">
    <location>
        <begin position="1"/>
        <end position="230"/>
    </location>
</feature>
<feature type="region of interest" description="Linker" evidence="1">
    <location>
        <begin position="231"/>
        <end position="251"/>
    </location>
</feature>
<feature type="region of interest" description="N-acetyltransferase" evidence="1">
    <location>
        <begin position="252"/>
        <end position="459"/>
    </location>
</feature>
<feature type="active site" description="Proton acceptor" evidence="1">
    <location>
        <position position="363"/>
    </location>
</feature>
<feature type="binding site" evidence="1">
    <location>
        <begin position="9"/>
        <end position="12"/>
    </location>
    <ligand>
        <name>UDP-N-acetyl-alpha-D-glucosamine</name>
        <dbReference type="ChEBI" id="CHEBI:57705"/>
    </ligand>
</feature>
<feature type="binding site" evidence="1">
    <location>
        <position position="23"/>
    </location>
    <ligand>
        <name>UDP-N-acetyl-alpha-D-glucosamine</name>
        <dbReference type="ChEBI" id="CHEBI:57705"/>
    </ligand>
</feature>
<feature type="binding site" evidence="1">
    <location>
        <position position="73"/>
    </location>
    <ligand>
        <name>UDP-N-acetyl-alpha-D-glucosamine</name>
        <dbReference type="ChEBI" id="CHEBI:57705"/>
    </ligand>
</feature>
<feature type="binding site" evidence="1">
    <location>
        <begin position="78"/>
        <end position="79"/>
    </location>
    <ligand>
        <name>UDP-N-acetyl-alpha-D-glucosamine</name>
        <dbReference type="ChEBI" id="CHEBI:57705"/>
    </ligand>
</feature>
<feature type="binding site" evidence="1">
    <location>
        <position position="103"/>
    </location>
    <ligand>
        <name>Mg(2+)</name>
        <dbReference type="ChEBI" id="CHEBI:18420"/>
    </ligand>
</feature>
<feature type="binding site" evidence="1">
    <location>
        <position position="140"/>
    </location>
    <ligand>
        <name>UDP-N-acetyl-alpha-D-glucosamine</name>
        <dbReference type="ChEBI" id="CHEBI:57705"/>
    </ligand>
</feature>
<feature type="binding site" evidence="1">
    <location>
        <position position="155"/>
    </location>
    <ligand>
        <name>UDP-N-acetyl-alpha-D-glucosamine</name>
        <dbReference type="ChEBI" id="CHEBI:57705"/>
    </ligand>
</feature>
<feature type="binding site" evidence="1">
    <location>
        <position position="170"/>
    </location>
    <ligand>
        <name>UDP-N-acetyl-alpha-D-glucosamine</name>
        <dbReference type="ChEBI" id="CHEBI:57705"/>
    </ligand>
</feature>
<feature type="binding site" evidence="1">
    <location>
        <position position="228"/>
    </location>
    <ligand>
        <name>Mg(2+)</name>
        <dbReference type="ChEBI" id="CHEBI:18420"/>
    </ligand>
</feature>
<feature type="binding site" evidence="1">
    <location>
        <position position="228"/>
    </location>
    <ligand>
        <name>UDP-N-acetyl-alpha-D-glucosamine</name>
        <dbReference type="ChEBI" id="CHEBI:57705"/>
    </ligand>
</feature>
<feature type="binding site" evidence="1">
    <location>
        <position position="333"/>
    </location>
    <ligand>
        <name>UDP-N-acetyl-alpha-D-glucosamine</name>
        <dbReference type="ChEBI" id="CHEBI:57705"/>
    </ligand>
</feature>
<feature type="binding site" evidence="1">
    <location>
        <position position="351"/>
    </location>
    <ligand>
        <name>UDP-N-acetyl-alpha-D-glucosamine</name>
        <dbReference type="ChEBI" id="CHEBI:57705"/>
    </ligand>
</feature>
<feature type="binding site" evidence="1">
    <location>
        <position position="366"/>
    </location>
    <ligand>
        <name>UDP-N-acetyl-alpha-D-glucosamine</name>
        <dbReference type="ChEBI" id="CHEBI:57705"/>
    </ligand>
</feature>
<feature type="binding site" evidence="1">
    <location>
        <position position="377"/>
    </location>
    <ligand>
        <name>UDP-N-acetyl-alpha-D-glucosamine</name>
        <dbReference type="ChEBI" id="CHEBI:57705"/>
    </ligand>
</feature>
<feature type="binding site" evidence="1">
    <location>
        <begin position="386"/>
        <end position="387"/>
    </location>
    <ligand>
        <name>acetyl-CoA</name>
        <dbReference type="ChEBI" id="CHEBI:57288"/>
    </ligand>
</feature>
<feature type="binding site" evidence="1">
    <location>
        <position position="423"/>
    </location>
    <ligand>
        <name>acetyl-CoA</name>
        <dbReference type="ChEBI" id="CHEBI:57288"/>
    </ligand>
</feature>
<feature type="binding site" evidence="1">
    <location>
        <position position="440"/>
    </location>
    <ligand>
        <name>acetyl-CoA</name>
        <dbReference type="ChEBI" id="CHEBI:57288"/>
    </ligand>
</feature>
<sequence>MSNRFAVILAAGKGTRMKSKLYKVLHPVCGKPMVQHVVDQVSQLGLQKLVTVVGHGAEMVQEQLGNVSEFALQAEQLGTAHAVDQAASVLANEEGTTLVICGDTPLITAETMEALLQQHKEAGAMATVLTAYIEEPAGYGRIVRNENGHVEKIVEHKDANEKELAIKEINTGTYCFDNKALFASLSKVSNDNVQGEYYLPDVIEILKNEGHIVSAYQTEQFDETLGVNDRVALSQAEIIMKNRINRKNMVNGVTIIDPSNTYISADAIIGSDTVLHPGTIIEGNTVIGSDCEIGPHTVIRDSEIGDRTTIRQSTVHDSKLGTEVSVGPFAHIRPDSVIGDEVRVGNFVEIKKTVFGNRSKASHLSYIGDAQVGEDVNLGCGSITVNYDGKNKFKTVIGNGVFIGCNSNLVAPVTVEDGAYVAAGSTITENVPSKALSVARARQVNKEDYVDQLLNKKKS</sequence>
<comment type="function">
    <text evidence="1">Catalyzes the last two sequential reactions in the de novo biosynthetic pathway for UDP-N-acetylglucosamine (UDP-GlcNAc). The C-terminal domain catalyzes the transfer of acetyl group from acetyl coenzyme A to glucosamine-1-phosphate (GlcN-1-P) to produce N-acetylglucosamine-1-phosphate (GlcNAc-1-P), which is converted into UDP-GlcNAc by the transfer of uridine 5-monophosphate (from uridine 5-triphosphate), a reaction catalyzed by the N-terminal domain.</text>
</comment>
<comment type="catalytic activity">
    <reaction evidence="1">
        <text>alpha-D-glucosamine 1-phosphate + acetyl-CoA = N-acetyl-alpha-D-glucosamine 1-phosphate + CoA + H(+)</text>
        <dbReference type="Rhea" id="RHEA:13725"/>
        <dbReference type="ChEBI" id="CHEBI:15378"/>
        <dbReference type="ChEBI" id="CHEBI:57287"/>
        <dbReference type="ChEBI" id="CHEBI:57288"/>
        <dbReference type="ChEBI" id="CHEBI:57776"/>
        <dbReference type="ChEBI" id="CHEBI:58516"/>
        <dbReference type="EC" id="2.3.1.157"/>
    </reaction>
</comment>
<comment type="catalytic activity">
    <reaction evidence="1">
        <text>N-acetyl-alpha-D-glucosamine 1-phosphate + UTP + H(+) = UDP-N-acetyl-alpha-D-glucosamine + diphosphate</text>
        <dbReference type="Rhea" id="RHEA:13509"/>
        <dbReference type="ChEBI" id="CHEBI:15378"/>
        <dbReference type="ChEBI" id="CHEBI:33019"/>
        <dbReference type="ChEBI" id="CHEBI:46398"/>
        <dbReference type="ChEBI" id="CHEBI:57705"/>
        <dbReference type="ChEBI" id="CHEBI:57776"/>
        <dbReference type="EC" id="2.7.7.23"/>
    </reaction>
</comment>
<comment type="cofactor">
    <cofactor evidence="1">
        <name>Mg(2+)</name>
        <dbReference type="ChEBI" id="CHEBI:18420"/>
    </cofactor>
    <text evidence="1">Binds 1 Mg(2+) ion per subunit.</text>
</comment>
<comment type="pathway">
    <text evidence="1">Nucleotide-sugar biosynthesis; UDP-N-acetyl-alpha-D-glucosamine biosynthesis; N-acetyl-alpha-D-glucosamine 1-phosphate from alpha-D-glucosamine 6-phosphate (route II): step 2/2.</text>
</comment>
<comment type="pathway">
    <text evidence="1">Nucleotide-sugar biosynthesis; UDP-N-acetyl-alpha-D-glucosamine biosynthesis; UDP-N-acetyl-alpha-D-glucosamine from N-acetyl-alpha-D-glucosamine 1-phosphate: step 1/1.</text>
</comment>
<comment type="pathway">
    <text evidence="1">Bacterial outer membrane biogenesis; LPS lipid A biosynthesis.</text>
</comment>
<comment type="subunit">
    <text evidence="1">Homotrimer.</text>
</comment>
<comment type="subcellular location">
    <subcellularLocation>
        <location evidence="1">Cytoplasm</location>
    </subcellularLocation>
</comment>
<comment type="similarity">
    <text evidence="1">In the N-terminal section; belongs to the N-acetylglucosamine-1-phosphate uridyltransferase family.</text>
</comment>
<comment type="similarity">
    <text evidence="1">In the C-terminal section; belongs to the transferase hexapeptide repeat family.</text>
</comment>
<gene>
    <name evidence="1" type="primary">glmU</name>
    <name type="ordered locus">BCG9842_B5262</name>
</gene>